<reference key="1">
    <citation type="journal article" date="2006" name="PLoS Genet.">
        <title>Secrets of soil survival revealed by the genome sequence of Arthrobacter aurescens TC1.</title>
        <authorList>
            <person name="Mongodin E.F."/>
            <person name="Shapir N."/>
            <person name="Daugherty S.C."/>
            <person name="DeBoy R.T."/>
            <person name="Emerson J.B."/>
            <person name="Shvartzbeyn A."/>
            <person name="Radune D."/>
            <person name="Vamathevan J."/>
            <person name="Riggs F."/>
            <person name="Grinberg V."/>
            <person name="Khouri H.M."/>
            <person name="Wackett L.P."/>
            <person name="Nelson K.E."/>
            <person name="Sadowsky M.J."/>
        </authorList>
    </citation>
    <scope>NUCLEOTIDE SEQUENCE [LARGE SCALE GENOMIC DNA]</scope>
    <source>
        <strain>TC1</strain>
    </source>
</reference>
<evidence type="ECO:0000255" key="1">
    <source>
        <dbReference type="HAMAP-Rule" id="MF_01342"/>
    </source>
</evidence>
<evidence type="ECO:0000256" key="2">
    <source>
        <dbReference type="SAM" id="MobiDB-lite"/>
    </source>
</evidence>
<evidence type="ECO:0000305" key="3"/>
<keyword id="KW-0687">Ribonucleoprotein</keyword>
<keyword id="KW-0689">Ribosomal protein</keyword>
<keyword id="KW-0694">RNA-binding</keyword>
<keyword id="KW-0699">rRNA-binding</keyword>
<keyword id="KW-0820">tRNA-binding</keyword>
<feature type="chain" id="PRO_1000054576" description="Large ribosomal subunit protein uL16">
    <location>
        <begin position="1"/>
        <end position="138"/>
    </location>
</feature>
<feature type="region of interest" description="Disordered" evidence="2">
    <location>
        <begin position="1"/>
        <end position="24"/>
    </location>
</feature>
<feature type="compositionally biased region" description="Basic residues" evidence="2">
    <location>
        <begin position="1"/>
        <end position="16"/>
    </location>
</feature>
<name>RL16_PAEAT</name>
<protein>
    <recommendedName>
        <fullName evidence="1">Large ribosomal subunit protein uL16</fullName>
    </recommendedName>
    <alternativeName>
        <fullName evidence="3">50S ribosomal protein L16</fullName>
    </alternativeName>
</protein>
<organism>
    <name type="scientific">Paenarthrobacter aurescens (strain TC1)</name>
    <dbReference type="NCBI Taxonomy" id="290340"/>
    <lineage>
        <taxon>Bacteria</taxon>
        <taxon>Bacillati</taxon>
        <taxon>Actinomycetota</taxon>
        <taxon>Actinomycetes</taxon>
        <taxon>Micrococcales</taxon>
        <taxon>Micrococcaceae</taxon>
        <taxon>Paenarthrobacter</taxon>
    </lineage>
</organism>
<sequence length="138" mass="15423">MLIPRRVKHRKQHHPGRSGAATGGTKVSFGEYGIQALSPAYVTNRQIESARIAMTRHIKRGGKVWINIYPDRPLTKKPAETRMGSGKGSPEWWVANVKPGRVLFELSGVNEEVAREALRLAIHKLPLKARIVRREGGE</sequence>
<accession>A1R8T8</accession>
<proteinExistence type="inferred from homology"/>
<gene>
    <name evidence="1" type="primary">rplP</name>
    <name type="ordered locus">AAur_2941</name>
</gene>
<dbReference type="EMBL" id="CP000474">
    <property type="protein sequence ID" value="ABM06767.1"/>
    <property type="molecule type" value="Genomic_DNA"/>
</dbReference>
<dbReference type="RefSeq" id="WP_003803795.1">
    <property type="nucleotide sequence ID" value="NC_008711.1"/>
</dbReference>
<dbReference type="SMR" id="A1R8T8"/>
<dbReference type="STRING" id="290340.AAur_2941"/>
<dbReference type="GeneID" id="97301785"/>
<dbReference type="KEGG" id="aau:AAur_2941"/>
<dbReference type="eggNOG" id="COG0197">
    <property type="taxonomic scope" value="Bacteria"/>
</dbReference>
<dbReference type="HOGENOM" id="CLU_078858_2_1_11"/>
<dbReference type="OrthoDB" id="9802589at2"/>
<dbReference type="Proteomes" id="UP000000637">
    <property type="component" value="Chromosome"/>
</dbReference>
<dbReference type="GO" id="GO:0022625">
    <property type="term" value="C:cytosolic large ribosomal subunit"/>
    <property type="evidence" value="ECO:0007669"/>
    <property type="project" value="TreeGrafter"/>
</dbReference>
<dbReference type="GO" id="GO:0019843">
    <property type="term" value="F:rRNA binding"/>
    <property type="evidence" value="ECO:0007669"/>
    <property type="project" value="UniProtKB-UniRule"/>
</dbReference>
<dbReference type="GO" id="GO:0003735">
    <property type="term" value="F:structural constituent of ribosome"/>
    <property type="evidence" value="ECO:0007669"/>
    <property type="project" value="InterPro"/>
</dbReference>
<dbReference type="GO" id="GO:0000049">
    <property type="term" value="F:tRNA binding"/>
    <property type="evidence" value="ECO:0007669"/>
    <property type="project" value="UniProtKB-KW"/>
</dbReference>
<dbReference type="GO" id="GO:0006412">
    <property type="term" value="P:translation"/>
    <property type="evidence" value="ECO:0007669"/>
    <property type="project" value="UniProtKB-UniRule"/>
</dbReference>
<dbReference type="CDD" id="cd01433">
    <property type="entry name" value="Ribosomal_L16_L10e"/>
    <property type="match status" value="1"/>
</dbReference>
<dbReference type="FunFam" id="3.90.1170.10:FF:000001">
    <property type="entry name" value="50S ribosomal protein L16"/>
    <property type="match status" value="1"/>
</dbReference>
<dbReference type="Gene3D" id="3.90.1170.10">
    <property type="entry name" value="Ribosomal protein L10e/L16"/>
    <property type="match status" value="1"/>
</dbReference>
<dbReference type="HAMAP" id="MF_01342">
    <property type="entry name" value="Ribosomal_uL16"/>
    <property type="match status" value="1"/>
</dbReference>
<dbReference type="InterPro" id="IPR047873">
    <property type="entry name" value="Ribosomal_uL16"/>
</dbReference>
<dbReference type="InterPro" id="IPR000114">
    <property type="entry name" value="Ribosomal_uL16_bact-type"/>
</dbReference>
<dbReference type="InterPro" id="IPR020798">
    <property type="entry name" value="Ribosomal_uL16_CS"/>
</dbReference>
<dbReference type="InterPro" id="IPR016180">
    <property type="entry name" value="Ribosomal_uL16_dom"/>
</dbReference>
<dbReference type="InterPro" id="IPR036920">
    <property type="entry name" value="Ribosomal_uL16_sf"/>
</dbReference>
<dbReference type="NCBIfam" id="TIGR01164">
    <property type="entry name" value="rplP_bact"/>
    <property type="match status" value="1"/>
</dbReference>
<dbReference type="PANTHER" id="PTHR12220">
    <property type="entry name" value="50S/60S RIBOSOMAL PROTEIN L16"/>
    <property type="match status" value="1"/>
</dbReference>
<dbReference type="PANTHER" id="PTHR12220:SF13">
    <property type="entry name" value="LARGE RIBOSOMAL SUBUNIT PROTEIN UL16M"/>
    <property type="match status" value="1"/>
</dbReference>
<dbReference type="Pfam" id="PF00252">
    <property type="entry name" value="Ribosomal_L16"/>
    <property type="match status" value="1"/>
</dbReference>
<dbReference type="PRINTS" id="PR00060">
    <property type="entry name" value="RIBOSOMALL16"/>
</dbReference>
<dbReference type="SUPFAM" id="SSF54686">
    <property type="entry name" value="Ribosomal protein L16p/L10e"/>
    <property type="match status" value="1"/>
</dbReference>
<dbReference type="PROSITE" id="PS00586">
    <property type="entry name" value="RIBOSOMAL_L16_1"/>
    <property type="match status" value="1"/>
</dbReference>
<dbReference type="PROSITE" id="PS00701">
    <property type="entry name" value="RIBOSOMAL_L16_2"/>
    <property type="match status" value="1"/>
</dbReference>
<comment type="function">
    <text evidence="1">Binds 23S rRNA and is also seen to make contacts with the A and possibly P site tRNAs.</text>
</comment>
<comment type="subunit">
    <text evidence="1">Part of the 50S ribosomal subunit.</text>
</comment>
<comment type="similarity">
    <text evidence="1">Belongs to the universal ribosomal protein uL16 family.</text>
</comment>